<organism>
    <name type="scientific">Staphylococcus aureus (strain NCTC 8325 / PS 47)</name>
    <dbReference type="NCBI Taxonomy" id="93061"/>
    <lineage>
        <taxon>Bacteria</taxon>
        <taxon>Bacillati</taxon>
        <taxon>Bacillota</taxon>
        <taxon>Bacilli</taxon>
        <taxon>Bacillales</taxon>
        <taxon>Staphylococcaceae</taxon>
        <taxon>Staphylococcus</taxon>
    </lineage>
</organism>
<comment type="function">
    <text evidence="1">F(1)F(0) ATP synthase produces ATP from ADP in the presence of a proton or sodium gradient. F-type ATPases consist of two structural domains, F(1) containing the extramembraneous catalytic core and F(0) containing the membrane proton channel, linked together by a central stalk and a peripheral stalk. During catalysis, ATP synthesis in the catalytic domain of F(1) is coupled via a rotary mechanism of the central stalk subunits to proton translocation.</text>
</comment>
<comment type="function">
    <text evidence="1">This protein is part of the stalk that links CF(0) to CF(1). It either transmits conformational changes from CF(0) to CF(1) or is implicated in proton conduction.</text>
</comment>
<comment type="subunit">
    <text evidence="1">F-type ATPases have 2 components, F(1) - the catalytic core - and F(0) - the membrane proton channel. F(1) has five subunits: alpha(3), beta(3), gamma(1), delta(1), epsilon(1). F(0) has three main subunits: a(1), b(2) and c(10-14). The alpha and beta chains form an alternating ring which encloses part of the gamma chain. F(1) is attached to F(0) by a central stalk formed by the gamma and epsilon chains, while a peripheral stalk is formed by the delta and b chains.</text>
</comment>
<comment type="subcellular location">
    <subcellularLocation>
        <location evidence="1">Cell membrane</location>
        <topology evidence="1">Peripheral membrane protein</topology>
    </subcellularLocation>
</comment>
<comment type="similarity">
    <text evidence="1">Belongs to the ATPase delta chain family.</text>
</comment>
<reference key="1">
    <citation type="book" date="2006" name="Gram positive pathogens, 2nd edition">
        <title>The Staphylococcus aureus NCTC 8325 genome.</title>
        <editorList>
            <person name="Fischetti V."/>
            <person name="Novick R."/>
            <person name="Ferretti J."/>
            <person name="Portnoy D."/>
            <person name="Rood J."/>
        </editorList>
        <authorList>
            <person name="Gillaspy A.F."/>
            <person name="Worrell V."/>
            <person name="Orvis J."/>
            <person name="Roe B.A."/>
            <person name="Dyer D.W."/>
            <person name="Iandolo J.J."/>
        </authorList>
    </citation>
    <scope>NUCLEOTIDE SEQUENCE [LARGE SCALE GENOMIC DNA]</scope>
    <source>
        <strain>NCTC 8325 / PS 47</strain>
    </source>
</reference>
<gene>
    <name evidence="1" type="primary">atpH</name>
    <name type="ordered locus">SAOUHSC_02346</name>
</gene>
<dbReference type="EMBL" id="CP000253">
    <property type="protein sequence ID" value="ABD31378.1"/>
    <property type="molecule type" value="Genomic_DNA"/>
</dbReference>
<dbReference type="RefSeq" id="WP_000241351.1">
    <property type="nucleotide sequence ID" value="NZ_LS483365.1"/>
</dbReference>
<dbReference type="RefSeq" id="YP_500823.1">
    <property type="nucleotide sequence ID" value="NC_007795.1"/>
</dbReference>
<dbReference type="SMR" id="Q2FWE7"/>
<dbReference type="STRING" id="93061.SAOUHSC_02346"/>
<dbReference type="PaxDb" id="1280-SAXN108_2351"/>
<dbReference type="GeneID" id="3919390"/>
<dbReference type="KEGG" id="sao:SAOUHSC_02346"/>
<dbReference type="PATRIC" id="fig|93061.5.peg.2124"/>
<dbReference type="eggNOG" id="COG0712">
    <property type="taxonomic scope" value="Bacteria"/>
</dbReference>
<dbReference type="HOGENOM" id="CLU_085114_4_1_9"/>
<dbReference type="OrthoDB" id="9802471at2"/>
<dbReference type="PRO" id="PR:Q2FWE7"/>
<dbReference type="Proteomes" id="UP000008816">
    <property type="component" value="Chromosome"/>
</dbReference>
<dbReference type="GO" id="GO:0005886">
    <property type="term" value="C:plasma membrane"/>
    <property type="evidence" value="ECO:0007669"/>
    <property type="project" value="UniProtKB-SubCell"/>
</dbReference>
<dbReference type="GO" id="GO:0045259">
    <property type="term" value="C:proton-transporting ATP synthase complex"/>
    <property type="evidence" value="ECO:0007669"/>
    <property type="project" value="UniProtKB-KW"/>
</dbReference>
<dbReference type="GO" id="GO:0046933">
    <property type="term" value="F:proton-transporting ATP synthase activity, rotational mechanism"/>
    <property type="evidence" value="ECO:0007669"/>
    <property type="project" value="UniProtKB-UniRule"/>
</dbReference>
<dbReference type="GO" id="GO:0015986">
    <property type="term" value="P:proton motive force-driven ATP synthesis"/>
    <property type="evidence" value="ECO:0000318"/>
    <property type="project" value="GO_Central"/>
</dbReference>
<dbReference type="Gene3D" id="1.10.520.20">
    <property type="entry name" value="N-terminal domain of the delta subunit of the F1F0-ATP synthase"/>
    <property type="match status" value="1"/>
</dbReference>
<dbReference type="HAMAP" id="MF_01416">
    <property type="entry name" value="ATP_synth_delta_bact"/>
    <property type="match status" value="1"/>
</dbReference>
<dbReference type="InterPro" id="IPR026015">
    <property type="entry name" value="ATP_synth_OSCP/delta_N_sf"/>
</dbReference>
<dbReference type="InterPro" id="IPR020781">
    <property type="entry name" value="ATPase_OSCP/d_CS"/>
</dbReference>
<dbReference type="InterPro" id="IPR000711">
    <property type="entry name" value="ATPase_OSCP/dsu"/>
</dbReference>
<dbReference type="NCBIfam" id="TIGR01145">
    <property type="entry name" value="ATP_synt_delta"/>
    <property type="match status" value="1"/>
</dbReference>
<dbReference type="NCBIfam" id="NF004399">
    <property type="entry name" value="PRK05758.1-1"/>
    <property type="match status" value="1"/>
</dbReference>
<dbReference type="PANTHER" id="PTHR11910">
    <property type="entry name" value="ATP SYNTHASE DELTA CHAIN"/>
    <property type="match status" value="1"/>
</dbReference>
<dbReference type="Pfam" id="PF00213">
    <property type="entry name" value="OSCP"/>
    <property type="match status" value="1"/>
</dbReference>
<dbReference type="PRINTS" id="PR00125">
    <property type="entry name" value="ATPASEDELTA"/>
</dbReference>
<dbReference type="SUPFAM" id="SSF47928">
    <property type="entry name" value="N-terminal domain of the delta subunit of the F1F0-ATP synthase"/>
    <property type="match status" value="1"/>
</dbReference>
<dbReference type="PROSITE" id="PS00389">
    <property type="entry name" value="ATPASE_DELTA"/>
    <property type="match status" value="1"/>
</dbReference>
<protein>
    <recommendedName>
        <fullName evidence="1">ATP synthase subunit delta</fullName>
    </recommendedName>
    <alternativeName>
        <fullName evidence="1">ATP synthase F(1) sector subunit delta</fullName>
    </alternativeName>
    <alternativeName>
        <fullName evidence="1">F-type ATPase subunit delta</fullName>
        <shortName evidence="1">F-ATPase subunit delta</shortName>
    </alternativeName>
</protein>
<accession>Q2FWE7</accession>
<name>ATPD_STAA8</name>
<sequence>MVKVANKYAKALFDVSLDTNNLETINEELTVINEAVKDKIEQLRMVDSNPTQTAEQRRELINGVFTDINPYIKNMMYVLADNRHISLIADVFKAFQSLYNGHYNQDFATIESTYELSQEELDKIVKLVTQQTKLSKVIVDTKINPDLIGGFRVKVGTTVLDGSVRNDLVQLQRKFRRVN</sequence>
<feature type="chain" id="PRO_1000184799" description="ATP synthase subunit delta">
    <location>
        <begin position="1"/>
        <end position="179"/>
    </location>
</feature>
<proteinExistence type="inferred from homology"/>
<evidence type="ECO:0000255" key="1">
    <source>
        <dbReference type="HAMAP-Rule" id="MF_01416"/>
    </source>
</evidence>
<keyword id="KW-0066">ATP synthesis</keyword>
<keyword id="KW-1003">Cell membrane</keyword>
<keyword id="KW-0139">CF(1)</keyword>
<keyword id="KW-0375">Hydrogen ion transport</keyword>
<keyword id="KW-0406">Ion transport</keyword>
<keyword id="KW-0472">Membrane</keyword>
<keyword id="KW-1185">Reference proteome</keyword>
<keyword id="KW-0813">Transport</keyword>